<feature type="chain" id="PRO_1000000130" description="Ribosome-binding factor A">
    <location>
        <begin position="1"/>
        <end position="119"/>
    </location>
</feature>
<gene>
    <name evidence="1" type="primary">rbfA</name>
    <name type="ordered locus">LSL_0573</name>
</gene>
<reference key="1">
    <citation type="journal article" date="2006" name="Proc. Natl. Acad. Sci. U.S.A.">
        <title>Multireplicon genome architecture of Lactobacillus salivarius.</title>
        <authorList>
            <person name="Claesson M.J."/>
            <person name="Li Y."/>
            <person name="Leahy S."/>
            <person name="Canchaya C."/>
            <person name="van Pijkeren J.P."/>
            <person name="Cerdeno-Tarraga A.M."/>
            <person name="Parkhill J."/>
            <person name="Flynn S."/>
            <person name="O'Sullivan G.C."/>
            <person name="Collins J.K."/>
            <person name="Higgins D."/>
            <person name="Shanahan F."/>
            <person name="Fitzgerald G.F."/>
            <person name="van Sinderen D."/>
            <person name="O'Toole P.W."/>
        </authorList>
    </citation>
    <scope>NUCLEOTIDE SEQUENCE [LARGE SCALE GENOMIC DNA]</scope>
    <source>
        <strain>UCC118</strain>
    </source>
</reference>
<comment type="function">
    <text evidence="1">One of several proteins that assist in the late maturation steps of the functional core of the 30S ribosomal subunit. Associates with free 30S ribosomal subunits (but not with 30S subunits that are part of 70S ribosomes or polysomes). Required for efficient processing of 16S rRNA. May interact with the 5'-terminal helix region of 16S rRNA.</text>
</comment>
<comment type="subunit">
    <text evidence="1">Monomer. Binds 30S ribosomal subunits, but not 50S ribosomal subunits or 70S ribosomes.</text>
</comment>
<comment type="subcellular location">
    <subcellularLocation>
        <location evidence="1">Cytoplasm</location>
    </subcellularLocation>
</comment>
<comment type="similarity">
    <text evidence="1">Belongs to the RbfA family.</text>
</comment>
<dbReference type="EMBL" id="CP000233">
    <property type="protein sequence ID" value="ABD99382.1"/>
    <property type="molecule type" value="Genomic_DNA"/>
</dbReference>
<dbReference type="RefSeq" id="WP_011475824.1">
    <property type="nucleotide sequence ID" value="NC_007929.1"/>
</dbReference>
<dbReference type="RefSeq" id="YP_535465.1">
    <property type="nucleotide sequence ID" value="NC_007929.1"/>
</dbReference>
<dbReference type="SMR" id="Q1WUF3"/>
<dbReference type="STRING" id="362948.LSL_0573"/>
<dbReference type="KEGG" id="lsl:LSL_0573"/>
<dbReference type="PATRIC" id="fig|362948.14.peg.652"/>
<dbReference type="HOGENOM" id="CLU_089475_3_0_9"/>
<dbReference type="OrthoDB" id="307788at2"/>
<dbReference type="Proteomes" id="UP000006559">
    <property type="component" value="Chromosome"/>
</dbReference>
<dbReference type="GO" id="GO:0005829">
    <property type="term" value="C:cytosol"/>
    <property type="evidence" value="ECO:0007669"/>
    <property type="project" value="TreeGrafter"/>
</dbReference>
<dbReference type="GO" id="GO:0043024">
    <property type="term" value="F:ribosomal small subunit binding"/>
    <property type="evidence" value="ECO:0007669"/>
    <property type="project" value="TreeGrafter"/>
</dbReference>
<dbReference type="GO" id="GO:0030490">
    <property type="term" value="P:maturation of SSU-rRNA"/>
    <property type="evidence" value="ECO:0007669"/>
    <property type="project" value="UniProtKB-UniRule"/>
</dbReference>
<dbReference type="Gene3D" id="3.30.300.20">
    <property type="match status" value="1"/>
</dbReference>
<dbReference type="HAMAP" id="MF_00003">
    <property type="entry name" value="RbfA"/>
    <property type="match status" value="1"/>
</dbReference>
<dbReference type="InterPro" id="IPR015946">
    <property type="entry name" value="KH_dom-like_a/b"/>
</dbReference>
<dbReference type="InterPro" id="IPR000238">
    <property type="entry name" value="RbfA"/>
</dbReference>
<dbReference type="InterPro" id="IPR023799">
    <property type="entry name" value="RbfA_dom_sf"/>
</dbReference>
<dbReference type="InterPro" id="IPR020053">
    <property type="entry name" value="Ribosome-bd_factorA_CS"/>
</dbReference>
<dbReference type="NCBIfam" id="TIGR00082">
    <property type="entry name" value="rbfA"/>
    <property type="match status" value="1"/>
</dbReference>
<dbReference type="PANTHER" id="PTHR33515">
    <property type="entry name" value="RIBOSOME-BINDING FACTOR A, CHLOROPLASTIC-RELATED"/>
    <property type="match status" value="1"/>
</dbReference>
<dbReference type="PANTHER" id="PTHR33515:SF1">
    <property type="entry name" value="RIBOSOME-BINDING FACTOR A, CHLOROPLASTIC-RELATED"/>
    <property type="match status" value="1"/>
</dbReference>
<dbReference type="Pfam" id="PF02033">
    <property type="entry name" value="RBFA"/>
    <property type="match status" value="1"/>
</dbReference>
<dbReference type="SUPFAM" id="SSF89919">
    <property type="entry name" value="Ribosome-binding factor A, RbfA"/>
    <property type="match status" value="1"/>
</dbReference>
<dbReference type="PROSITE" id="PS01319">
    <property type="entry name" value="RBFA"/>
    <property type="match status" value="1"/>
</dbReference>
<evidence type="ECO:0000255" key="1">
    <source>
        <dbReference type="HAMAP-Rule" id="MF_00003"/>
    </source>
</evidence>
<protein>
    <recommendedName>
        <fullName evidence="1">Ribosome-binding factor A</fullName>
    </recommendedName>
</protein>
<accession>Q1WUF3</accession>
<name>RBFA_LIGS1</name>
<keyword id="KW-0963">Cytoplasm</keyword>
<keyword id="KW-1185">Reference proteome</keyword>
<keyword id="KW-0690">Ribosome biogenesis</keyword>
<organism>
    <name type="scientific">Ligilactobacillus salivarius (strain UCC118)</name>
    <name type="common">Lactobacillus salivarius</name>
    <dbReference type="NCBI Taxonomy" id="362948"/>
    <lineage>
        <taxon>Bacteria</taxon>
        <taxon>Bacillati</taxon>
        <taxon>Bacillota</taxon>
        <taxon>Bacilli</taxon>
        <taxon>Lactobacillales</taxon>
        <taxon>Lactobacillaceae</taxon>
        <taxon>Ligilactobacillus</taxon>
    </lineage>
</organism>
<proteinExistence type="inferred from homology"/>
<sequence length="119" mass="13691">MAQHFRVGRLSQEIQREVNDILLKRVRDPRVKDVTITGVEVSGDLQHATIYYSILSDKASDEKKVQTGLDKATSLIRGELGHRLSIYVTPEIKFERDKSVQYGDHINELLRKLHSTDKF</sequence>